<dbReference type="EMBL" id="AY008980">
    <property type="protein sequence ID" value="AAG31874.1"/>
    <property type="molecule type" value="Genomic_DNA"/>
</dbReference>
<dbReference type="RefSeq" id="YP_010270228.1">
    <property type="nucleotide sequence ID" value="NC_060724.1"/>
</dbReference>
<dbReference type="GeneID" id="70624499"/>
<dbReference type="GO" id="GO:0009507">
    <property type="term" value="C:chloroplast"/>
    <property type="evidence" value="ECO:0007669"/>
    <property type="project" value="UniProtKB-SubCell"/>
</dbReference>
<dbReference type="GO" id="GO:0003723">
    <property type="term" value="F:RNA binding"/>
    <property type="evidence" value="ECO:0007669"/>
    <property type="project" value="UniProtKB-KW"/>
</dbReference>
<dbReference type="GO" id="GO:0006397">
    <property type="term" value="P:mRNA processing"/>
    <property type="evidence" value="ECO:0007669"/>
    <property type="project" value="UniProtKB-KW"/>
</dbReference>
<dbReference type="GO" id="GO:0008380">
    <property type="term" value="P:RNA splicing"/>
    <property type="evidence" value="ECO:0007669"/>
    <property type="project" value="UniProtKB-UniRule"/>
</dbReference>
<dbReference type="GO" id="GO:0008033">
    <property type="term" value="P:tRNA processing"/>
    <property type="evidence" value="ECO:0007669"/>
    <property type="project" value="UniProtKB-KW"/>
</dbReference>
<dbReference type="HAMAP" id="MF_01390">
    <property type="entry name" value="MatK"/>
    <property type="match status" value="1"/>
</dbReference>
<dbReference type="InterPro" id="IPR024937">
    <property type="entry name" value="Domain_X"/>
</dbReference>
<dbReference type="InterPro" id="IPR002866">
    <property type="entry name" value="Maturase_MatK"/>
</dbReference>
<dbReference type="InterPro" id="IPR024942">
    <property type="entry name" value="Maturase_MatK_N"/>
</dbReference>
<dbReference type="PANTHER" id="PTHR34811">
    <property type="entry name" value="MATURASE K"/>
    <property type="match status" value="1"/>
</dbReference>
<dbReference type="PANTHER" id="PTHR34811:SF1">
    <property type="entry name" value="MATURASE K"/>
    <property type="match status" value="1"/>
</dbReference>
<dbReference type="Pfam" id="PF01348">
    <property type="entry name" value="Intron_maturas2"/>
    <property type="match status" value="1"/>
</dbReference>
<dbReference type="Pfam" id="PF01824">
    <property type="entry name" value="MatK_N"/>
    <property type="match status" value="1"/>
</dbReference>
<keyword id="KW-0150">Chloroplast</keyword>
<keyword id="KW-0507">mRNA processing</keyword>
<keyword id="KW-0934">Plastid</keyword>
<keyword id="KW-0694">RNA-binding</keyword>
<keyword id="KW-0819">tRNA processing</keyword>
<organism>
    <name type="scientific">Magnolia champaca</name>
    <name type="common">Yellow jade orchid tree</name>
    <name type="synonym">Michelia champaca</name>
    <dbReference type="NCBI Taxonomy" id="86757"/>
    <lineage>
        <taxon>Eukaryota</taxon>
        <taxon>Viridiplantae</taxon>
        <taxon>Streptophyta</taxon>
        <taxon>Embryophyta</taxon>
        <taxon>Tracheophyta</taxon>
        <taxon>Spermatophyta</taxon>
        <taxon>Magnoliopsida</taxon>
        <taxon>Magnoliidae</taxon>
        <taxon>Magnoliales</taxon>
        <taxon>Magnoliaceae</taxon>
        <taxon>Magnolia</taxon>
    </lineage>
</organism>
<protein>
    <recommendedName>
        <fullName evidence="1">Maturase K</fullName>
    </recommendedName>
    <alternativeName>
        <fullName evidence="1">Intron maturase</fullName>
    </alternativeName>
</protein>
<reference key="1">
    <citation type="submission" date="2000-10" db="EMBL/GenBank/DDBJ databases">
        <title>Phylogeny of Magnoliaceae based on 10 chloroplast DNA regions.</title>
        <authorList>
            <person name="Kim S."/>
            <person name="Park C.-W."/>
            <person name="Suh Y."/>
        </authorList>
    </citation>
    <scope>NUCLEOTIDE SEQUENCE [GENOMIC DNA]</scope>
</reference>
<feature type="chain" id="PRO_0000143521" description="Maturase K">
    <location>
        <begin position="1"/>
        <end position="507"/>
    </location>
</feature>
<gene>
    <name evidence="1" type="primary">matK</name>
</gene>
<name>MATK_MAGCH</name>
<sequence>MEELQGYLEIDRSRQQHFLYPLLFQEYIYALAHDHGLNGSIFYEPMENFGYDNKSSSLIVKRLITRMHQQNHLILSVNDSNESIFVGHNKNFYFQMVSEGFAVIMEIPFSLRLVSSLEEKEIAKSHNSRSIHSIFPFFEDKLSHLNHVSDILIPHPIHLEILVQTLHCWIQDAPSLHLLRFFLHEYRNSNSLITPKKSISLFSKENQRFFLLLYNSHVYECESVLVFLRKQSSHLRSTSSGTFLERTHFYGKIEHLVVVLRNDFQKTLWLFKDPFMHYVRYQGKSILASKGTHLLMKKWKSHLVHFWQCHFYLWSLPDRIHINQLYNHFLYFLGYLSSVRLNTSVVRIQMLENSFLIDTSINKFETLVPIIPLIGSVAKAKFCNVSGHPISKSVRADSSDSDIINRFGRIYRNLSHYHSGSSKKQTLYRIKYILRLSCARTLARKHKSTVRAFLKRLGSEFLEEFLTEEEQVLSLIFQRTSSPSYRSHRERIWYLDIIRINDLANHS</sequence>
<evidence type="ECO:0000255" key="1">
    <source>
        <dbReference type="HAMAP-Rule" id="MF_01390"/>
    </source>
</evidence>
<proteinExistence type="inferred from homology"/>
<geneLocation type="chloroplast"/>
<comment type="function">
    <text evidence="1">Usually encoded in the trnK tRNA gene intron. Probably assists in splicing its own and other chloroplast group II introns.</text>
</comment>
<comment type="subcellular location">
    <subcellularLocation>
        <location>Plastid</location>
        <location>Chloroplast</location>
    </subcellularLocation>
</comment>
<comment type="similarity">
    <text evidence="1">Belongs to the intron maturase 2 family. MatK subfamily.</text>
</comment>
<accession>Q3T8Q6</accession>